<accession>Q6S5G4</accession>
<accession>Q3TFY9</accession>
<accession>Q8BLZ9</accession>
<gene>
    <name type="primary">Gja6</name>
</gene>
<reference key="1">
    <citation type="submission" date="2003-11" db="EMBL/GenBank/DDBJ databases">
        <title>A critical role of the mouse connexin 33 in Sertoli-germ cells interactions.</title>
        <authorList>
            <person name="Gillot I."/>
            <person name="Ranc F."/>
            <person name="Martin L."/>
        </authorList>
    </citation>
    <scope>NUCLEOTIDE SEQUENCE [GENOMIC DNA]</scope>
    <source>
        <strain>C57BL/6 X DBA/2</strain>
        <tissue>Testis</tissue>
    </source>
</reference>
<reference key="2">
    <citation type="journal article" date="2005" name="Science">
        <title>The transcriptional landscape of the mammalian genome.</title>
        <authorList>
            <person name="Carninci P."/>
            <person name="Kasukawa T."/>
            <person name="Katayama S."/>
            <person name="Gough J."/>
            <person name="Frith M.C."/>
            <person name="Maeda N."/>
            <person name="Oyama R."/>
            <person name="Ravasi T."/>
            <person name="Lenhard B."/>
            <person name="Wells C."/>
            <person name="Kodzius R."/>
            <person name="Shimokawa K."/>
            <person name="Bajic V.B."/>
            <person name="Brenner S.E."/>
            <person name="Batalov S."/>
            <person name="Forrest A.R."/>
            <person name="Zavolan M."/>
            <person name="Davis M.J."/>
            <person name="Wilming L.G."/>
            <person name="Aidinis V."/>
            <person name="Allen J.E."/>
            <person name="Ambesi-Impiombato A."/>
            <person name="Apweiler R."/>
            <person name="Aturaliya R.N."/>
            <person name="Bailey T.L."/>
            <person name="Bansal M."/>
            <person name="Baxter L."/>
            <person name="Beisel K.W."/>
            <person name="Bersano T."/>
            <person name="Bono H."/>
            <person name="Chalk A.M."/>
            <person name="Chiu K.P."/>
            <person name="Choudhary V."/>
            <person name="Christoffels A."/>
            <person name="Clutterbuck D.R."/>
            <person name="Crowe M.L."/>
            <person name="Dalla E."/>
            <person name="Dalrymple B.P."/>
            <person name="de Bono B."/>
            <person name="Della Gatta G."/>
            <person name="di Bernardo D."/>
            <person name="Down T."/>
            <person name="Engstrom P."/>
            <person name="Fagiolini M."/>
            <person name="Faulkner G."/>
            <person name="Fletcher C.F."/>
            <person name="Fukushima T."/>
            <person name="Furuno M."/>
            <person name="Futaki S."/>
            <person name="Gariboldi M."/>
            <person name="Georgii-Hemming P."/>
            <person name="Gingeras T.R."/>
            <person name="Gojobori T."/>
            <person name="Green R.E."/>
            <person name="Gustincich S."/>
            <person name="Harbers M."/>
            <person name="Hayashi Y."/>
            <person name="Hensch T.K."/>
            <person name="Hirokawa N."/>
            <person name="Hill D."/>
            <person name="Huminiecki L."/>
            <person name="Iacono M."/>
            <person name="Ikeo K."/>
            <person name="Iwama A."/>
            <person name="Ishikawa T."/>
            <person name="Jakt M."/>
            <person name="Kanapin A."/>
            <person name="Katoh M."/>
            <person name="Kawasawa Y."/>
            <person name="Kelso J."/>
            <person name="Kitamura H."/>
            <person name="Kitano H."/>
            <person name="Kollias G."/>
            <person name="Krishnan S.P."/>
            <person name="Kruger A."/>
            <person name="Kummerfeld S.K."/>
            <person name="Kurochkin I.V."/>
            <person name="Lareau L.F."/>
            <person name="Lazarevic D."/>
            <person name="Lipovich L."/>
            <person name="Liu J."/>
            <person name="Liuni S."/>
            <person name="McWilliam S."/>
            <person name="Madan Babu M."/>
            <person name="Madera M."/>
            <person name="Marchionni L."/>
            <person name="Matsuda H."/>
            <person name="Matsuzawa S."/>
            <person name="Miki H."/>
            <person name="Mignone F."/>
            <person name="Miyake S."/>
            <person name="Morris K."/>
            <person name="Mottagui-Tabar S."/>
            <person name="Mulder N."/>
            <person name="Nakano N."/>
            <person name="Nakauchi H."/>
            <person name="Ng P."/>
            <person name="Nilsson R."/>
            <person name="Nishiguchi S."/>
            <person name="Nishikawa S."/>
            <person name="Nori F."/>
            <person name="Ohara O."/>
            <person name="Okazaki Y."/>
            <person name="Orlando V."/>
            <person name="Pang K.C."/>
            <person name="Pavan W.J."/>
            <person name="Pavesi G."/>
            <person name="Pesole G."/>
            <person name="Petrovsky N."/>
            <person name="Piazza S."/>
            <person name="Reed J."/>
            <person name="Reid J.F."/>
            <person name="Ring B.Z."/>
            <person name="Ringwald M."/>
            <person name="Rost B."/>
            <person name="Ruan Y."/>
            <person name="Salzberg S.L."/>
            <person name="Sandelin A."/>
            <person name="Schneider C."/>
            <person name="Schoenbach C."/>
            <person name="Sekiguchi K."/>
            <person name="Semple C.A."/>
            <person name="Seno S."/>
            <person name="Sessa L."/>
            <person name="Sheng Y."/>
            <person name="Shibata Y."/>
            <person name="Shimada H."/>
            <person name="Shimada K."/>
            <person name="Silva D."/>
            <person name="Sinclair B."/>
            <person name="Sperling S."/>
            <person name="Stupka E."/>
            <person name="Sugiura K."/>
            <person name="Sultana R."/>
            <person name="Takenaka Y."/>
            <person name="Taki K."/>
            <person name="Tammoja K."/>
            <person name="Tan S.L."/>
            <person name="Tang S."/>
            <person name="Taylor M.S."/>
            <person name="Tegner J."/>
            <person name="Teichmann S.A."/>
            <person name="Ueda H.R."/>
            <person name="van Nimwegen E."/>
            <person name="Verardo R."/>
            <person name="Wei C.L."/>
            <person name="Yagi K."/>
            <person name="Yamanishi H."/>
            <person name="Zabarovsky E."/>
            <person name="Zhu S."/>
            <person name="Zimmer A."/>
            <person name="Hide W."/>
            <person name="Bult C."/>
            <person name="Grimmond S.M."/>
            <person name="Teasdale R.D."/>
            <person name="Liu E.T."/>
            <person name="Brusic V."/>
            <person name="Quackenbush J."/>
            <person name="Wahlestedt C."/>
            <person name="Mattick J.S."/>
            <person name="Hume D.A."/>
            <person name="Kai C."/>
            <person name="Sasaki D."/>
            <person name="Tomaru Y."/>
            <person name="Fukuda S."/>
            <person name="Kanamori-Katayama M."/>
            <person name="Suzuki M."/>
            <person name="Aoki J."/>
            <person name="Arakawa T."/>
            <person name="Iida J."/>
            <person name="Imamura K."/>
            <person name="Itoh M."/>
            <person name="Kato T."/>
            <person name="Kawaji H."/>
            <person name="Kawagashira N."/>
            <person name="Kawashima T."/>
            <person name="Kojima M."/>
            <person name="Kondo S."/>
            <person name="Konno H."/>
            <person name="Nakano K."/>
            <person name="Ninomiya N."/>
            <person name="Nishio T."/>
            <person name="Okada M."/>
            <person name="Plessy C."/>
            <person name="Shibata K."/>
            <person name="Shiraki T."/>
            <person name="Suzuki S."/>
            <person name="Tagami M."/>
            <person name="Waki K."/>
            <person name="Watahiki A."/>
            <person name="Okamura-Oho Y."/>
            <person name="Suzuki H."/>
            <person name="Kawai J."/>
            <person name="Hayashizaki Y."/>
        </authorList>
    </citation>
    <scope>NUCLEOTIDE SEQUENCE [LARGE SCALE MRNA]</scope>
    <source>
        <strain>C57BL/6J</strain>
        <tissue>Aorta</tissue>
        <tissue>Liver</tissue>
        <tissue>Vein</tissue>
    </source>
</reference>
<reference key="3">
    <citation type="journal article" date="2009" name="PLoS Biol.">
        <title>Lineage-specific biology revealed by a finished genome assembly of the mouse.</title>
        <authorList>
            <person name="Church D.M."/>
            <person name="Goodstadt L."/>
            <person name="Hillier L.W."/>
            <person name="Zody M.C."/>
            <person name="Goldstein S."/>
            <person name="She X."/>
            <person name="Bult C.J."/>
            <person name="Agarwala R."/>
            <person name="Cherry J.L."/>
            <person name="DiCuccio M."/>
            <person name="Hlavina W."/>
            <person name="Kapustin Y."/>
            <person name="Meric P."/>
            <person name="Maglott D."/>
            <person name="Birtle Z."/>
            <person name="Marques A.C."/>
            <person name="Graves T."/>
            <person name="Zhou S."/>
            <person name="Teague B."/>
            <person name="Potamousis K."/>
            <person name="Churas C."/>
            <person name="Place M."/>
            <person name="Herschleb J."/>
            <person name="Runnheim R."/>
            <person name="Forrest D."/>
            <person name="Amos-Landgraf J."/>
            <person name="Schwartz D.C."/>
            <person name="Cheng Z."/>
            <person name="Lindblad-Toh K."/>
            <person name="Eichler E.E."/>
            <person name="Ponting C.P."/>
        </authorList>
    </citation>
    <scope>NUCLEOTIDE SEQUENCE [LARGE SCALE GENOMIC DNA]</scope>
    <source>
        <strain>C57BL/6J</strain>
    </source>
</reference>
<reference key="4">
    <citation type="submission" date="2005-07" db="EMBL/GenBank/DDBJ databases">
        <authorList>
            <person name="Mural R.J."/>
            <person name="Adams M.D."/>
            <person name="Myers E.W."/>
            <person name="Smith H.O."/>
            <person name="Venter J.C."/>
        </authorList>
    </citation>
    <scope>NUCLEOTIDE SEQUENCE [LARGE SCALE GENOMIC DNA]</scope>
</reference>
<reference key="5">
    <citation type="journal article" date="2004" name="Genome Res.">
        <title>The status, quality, and expansion of the NIH full-length cDNA project: the Mammalian Gene Collection (MGC).</title>
        <authorList>
            <consortium name="The MGC Project Team"/>
        </authorList>
    </citation>
    <scope>NUCLEOTIDE SEQUENCE [LARGE SCALE MRNA]</scope>
</reference>
<sequence length="283" mass="32660">MSDWSALHQLLEKVQPYSTAGGKVWIKVLFIFRILLLGTAIESAWSDEQFEFHCNTQQPGCENVCYDHAFPISHVRLWVLQVIFVSVPILLYLAHVYYVVRQNKKLNKQEEELEAAHFNEASVERHLETIAGEQFKCGSEEQSKVKMRGRLLLTYMASIFFKSVFEMAFLLIQWYIYGFTLSALYICEQSPCPRRVDCFLSRPTEKTIFILFMFVVSVVSFVLDIIELFYVLFKAIKNRMRKAEDEVYCDELPCPSHVSSSTVLTTIDSSEQAVPVELSSVCI</sequence>
<keyword id="KW-0965">Cell junction</keyword>
<keyword id="KW-1003">Cell membrane</keyword>
<keyword id="KW-0303">Gap junction</keyword>
<keyword id="KW-0472">Membrane</keyword>
<keyword id="KW-1185">Reference proteome</keyword>
<keyword id="KW-0812">Transmembrane</keyword>
<keyword id="KW-1133">Transmembrane helix</keyword>
<evidence type="ECO:0000255" key="1"/>
<evidence type="ECO:0000305" key="2"/>
<name>CXA6_MOUSE</name>
<protein>
    <recommendedName>
        <fullName>Gap junction alpha-6 protein</fullName>
    </recommendedName>
    <alternativeName>
        <fullName>Connexin-33</fullName>
        <shortName>Cx33</shortName>
    </alternativeName>
</protein>
<organism>
    <name type="scientific">Mus musculus</name>
    <name type="common">Mouse</name>
    <dbReference type="NCBI Taxonomy" id="10090"/>
    <lineage>
        <taxon>Eukaryota</taxon>
        <taxon>Metazoa</taxon>
        <taxon>Chordata</taxon>
        <taxon>Craniata</taxon>
        <taxon>Vertebrata</taxon>
        <taxon>Euteleostomi</taxon>
        <taxon>Mammalia</taxon>
        <taxon>Eutheria</taxon>
        <taxon>Euarchontoglires</taxon>
        <taxon>Glires</taxon>
        <taxon>Rodentia</taxon>
        <taxon>Myomorpha</taxon>
        <taxon>Muroidea</taxon>
        <taxon>Muridae</taxon>
        <taxon>Murinae</taxon>
        <taxon>Mus</taxon>
        <taxon>Mus</taxon>
    </lineage>
</organism>
<comment type="function">
    <text>One gap junction consists of a cluster of closely packed pairs of transmembrane channels, the connexons, through which materials of low MW diffuse from one cell to a neighboring cell.</text>
</comment>
<comment type="subunit">
    <text>A connexon is composed of a hexamer of connexins.</text>
</comment>
<comment type="subcellular location">
    <subcellularLocation>
        <location>Cell membrane</location>
        <topology>Multi-pass membrane protein</topology>
    </subcellularLocation>
    <subcellularLocation>
        <location>Cell junction</location>
        <location>Gap junction</location>
    </subcellularLocation>
</comment>
<comment type="similarity">
    <text evidence="2">Belongs to the connexin family. Alpha-type (group II) subfamily.</text>
</comment>
<feature type="chain" id="PRO_0000057823" description="Gap junction alpha-6 protein">
    <location>
        <begin position="1"/>
        <end position="283"/>
    </location>
</feature>
<feature type="topological domain" description="Cytoplasmic" evidence="1">
    <location>
        <begin position="1"/>
        <end position="23"/>
    </location>
</feature>
<feature type="transmembrane region" description="Helical" evidence="1">
    <location>
        <begin position="24"/>
        <end position="41"/>
    </location>
</feature>
<feature type="topological domain" description="Extracellular" evidence="1">
    <location>
        <begin position="42"/>
        <end position="76"/>
    </location>
</feature>
<feature type="transmembrane region" description="Helical" evidence="1">
    <location>
        <begin position="77"/>
        <end position="99"/>
    </location>
</feature>
<feature type="topological domain" description="Cytoplasmic" evidence="1">
    <location>
        <begin position="100"/>
        <end position="150"/>
    </location>
</feature>
<feature type="transmembrane region" description="Helical" evidence="1">
    <location>
        <begin position="151"/>
        <end position="173"/>
    </location>
</feature>
<feature type="topological domain" description="Extracellular" evidence="1">
    <location>
        <begin position="174"/>
        <end position="208"/>
    </location>
</feature>
<feature type="transmembrane region" description="Helical" evidence="1">
    <location>
        <begin position="209"/>
        <end position="231"/>
    </location>
</feature>
<feature type="topological domain" description="Cytoplasmic" evidence="1">
    <location>
        <begin position="232"/>
        <end position="283"/>
    </location>
</feature>
<feature type="sequence conflict" description="In Ref. 1; AAR28037." evidence="2" ref="1">
    <original>V</original>
    <variation>A</variation>
    <location>
        <position position="96"/>
    </location>
</feature>
<proteinExistence type="evidence at transcript level"/>
<dbReference type="EMBL" id="AY465183">
    <property type="protein sequence ID" value="AAR28037.1"/>
    <property type="molecule type" value="Genomic_DNA"/>
</dbReference>
<dbReference type="EMBL" id="AK040693">
    <property type="protein sequence ID" value="BAC30669.1"/>
    <property type="molecule type" value="mRNA"/>
</dbReference>
<dbReference type="EMBL" id="AK146838">
    <property type="protein sequence ID" value="BAE27472.1"/>
    <property type="molecule type" value="mRNA"/>
</dbReference>
<dbReference type="EMBL" id="AK168953">
    <property type="protein sequence ID" value="BAE40759.1"/>
    <property type="molecule type" value="mRNA"/>
</dbReference>
<dbReference type="EMBL" id="AL669939">
    <property type="status" value="NOT_ANNOTATED_CDS"/>
    <property type="molecule type" value="Genomic_DNA"/>
</dbReference>
<dbReference type="EMBL" id="AL670462">
    <property type="status" value="NOT_ANNOTATED_CDS"/>
    <property type="molecule type" value="Genomic_DNA"/>
</dbReference>
<dbReference type="EMBL" id="CR478402">
    <property type="status" value="NOT_ANNOTATED_CDS"/>
    <property type="molecule type" value="Genomic_DNA"/>
</dbReference>
<dbReference type="EMBL" id="BC117760">
    <property type="protein sequence ID" value="AAI17761.1"/>
    <property type="molecule type" value="mRNA"/>
</dbReference>
<dbReference type="EMBL" id="CH466571">
    <property type="protein sequence ID" value="EDL40800.1"/>
    <property type="molecule type" value="Genomic_DNA"/>
</dbReference>
<dbReference type="CCDS" id="CCDS30506.1"/>
<dbReference type="RefSeq" id="NP_001001496.1">
    <property type="nucleotide sequence ID" value="NM_001001496.2"/>
</dbReference>
<dbReference type="SMR" id="Q6S5G4"/>
<dbReference type="STRING" id="10090.ENSMUSP00000069187"/>
<dbReference type="PaxDb" id="10090-ENSMUSP00000069187"/>
<dbReference type="Antibodypedia" id="4382">
    <property type="antibodies" value="1225 antibodies from 47 providers"/>
</dbReference>
<dbReference type="Ensembl" id="ENSMUST00000069417.6">
    <property type="protein sequence ID" value="ENSMUSP00000069187.6"/>
    <property type="gene ID" value="ENSMUSG00000055691.6"/>
</dbReference>
<dbReference type="GeneID" id="414089"/>
<dbReference type="KEGG" id="mmu:414089"/>
<dbReference type="UCSC" id="uc009utt.2">
    <property type="organism name" value="mouse"/>
</dbReference>
<dbReference type="AGR" id="MGI:95717"/>
<dbReference type="CTD" id="414089"/>
<dbReference type="MGI" id="MGI:95717">
    <property type="gene designation" value="Gja6"/>
</dbReference>
<dbReference type="VEuPathDB" id="HostDB:ENSMUSG00000055691"/>
<dbReference type="eggNOG" id="ENOG502QRAE">
    <property type="taxonomic scope" value="Eukaryota"/>
</dbReference>
<dbReference type="GeneTree" id="ENSGT01090000260070"/>
<dbReference type="HOGENOM" id="CLU_037388_4_1_1"/>
<dbReference type="InParanoid" id="Q6S5G4"/>
<dbReference type="OMA" id="NVCYDVA"/>
<dbReference type="OrthoDB" id="8773830at2759"/>
<dbReference type="PhylomeDB" id="Q6S5G4"/>
<dbReference type="TreeFam" id="TF329606"/>
<dbReference type="BioGRID-ORCS" id="414089">
    <property type="hits" value="1 hit in 75 CRISPR screens"/>
</dbReference>
<dbReference type="PRO" id="PR:Q6S5G4"/>
<dbReference type="Proteomes" id="UP000000589">
    <property type="component" value="Chromosome X"/>
</dbReference>
<dbReference type="RNAct" id="Q6S5G4">
    <property type="molecule type" value="protein"/>
</dbReference>
<dbReference type="Bgee" id="ENSMUSG00000055691">
    <property type="expression patterns" value="Expressed in mesodermal cell in embryo and 13 other cell types or tissues"/>
</dbReference>
<dbReference type="ExpressionAtlas" id="Q6S5G4">
    <property type="expression patterns" value="baseline and differential"/>
</dbReference>
<dbReference type="GO" id="GO:0005922">
    <property type="term" value="C:connexin complex"/>
    <property type="evidence" value="ECO:0007669"/>
    <property type="project" value="InterPro"/>
</dbReference>
<dbReference type="GO" id="GO:0007154">
    <property type="term" value="P:cell communication"/>
    <property type="evidence" value="ECO:0007669"/>
    <property type="project" value="InterPro"/>
</dbReference>
<dbReference type="FunFam" id="1.20.1440.80:FF:000001">
    <property type="entry name" value="Gap junction alpha-1"/>
    <property type="match status" value="1"/>
</dbReference>
<dbReference type="Gene3D" id="1.20.1440.80">
    <property type="entry name" value="Gap junction channel protein cysteine-rich domain"/>
    <property type="match status" value="1"/>
</dbReference>
<dbReference type="InterPro" id="IPR000500">
    <property type="entry name" value="Connexin"/>
</dbReference>
<dbReference type="InterPro" id="IPR019570">
    <property type="entry name" value="Connexin_CCC"/>
</dbReference>
<dbReference type="InterPro" id="IPR017990">
    <property type="entry name" value="Connexin_CS"/>
</dbReference>
<dbReference type="InterPro" id="IPR013092">
    <property type="entry name" value="Connexin_N"/>
</dbReference>
<dbReference type="InterPro" id="IPR038359">
    <property type="entry name" value="Connexin_N_sf"/>
</dbReference>
<dbReference type="PANTHER" id="PTHR11984">
    <property type="entry name" value="CONNEXIN"/>
    <property type="match status" value="1"/>
</dbReference>
<dbReference type="PANTHER" id="PTHR11984:SF42">
    <property type="entry name" value="GAP JUNCTION ALPHA-6 PROTEIN"/>
    <property type="match status" value="1"/>
</dbReference>
<dbReference type="Pfam" id="PF00029">
    <property type="entry name" value="Connexin"/>
    <property type="match status" value="1"/>
</dbReference>
<dbReference type="PRINTS" id="PR00206">
    <property type="entry name" value="CONNEXIN"/>
</dbReference>
<dbReference type="SMART" id="SM00037">
    <property type="entry name" value="CNX"/>
    <property type="match status" value="1"/>
</dbReference>
<dbReference type="SMART" id="SM01089">
    <property type="entry name" value="Connexin_CCC"/>
    <property type="match status" value="1"/>
</dbReference>
<dbReference type="PROSITE" id="PS00407">
    <property type="entry name" value="CONNEXINS_1"/>
    <property type="match status" value="1"/>
</dbReference>
<dbReference type="PROSITE" id="PS00408">
    <property type="entry name" value="CONNEXINS_2"/>
    <property type="match status" value="1"/>
</dbReference>